<proteinExistence type="inferred from homology"/>
<organism>
    <name type="scientific">Mannheimia succiniciproducens (strain KCTC 0769BP / MBEL55E)</name>
    <dbReference type="NCBI Taxonomy" id="221988"/>
    <lineage>
        <taxon>Bacteria</taxon>
        <taxon>Pseudomonadati</taxon>
        <taxon>Pseudomonadota</taxon>
        <taxon>Gammaproteobacteria</taxon>
        <taxon>Pasteurellales</taxon>
        <taxon>Pasteurellaceae</taxon>
        <taxon>Basfia</taxon>
    </lineage>
</organism>
<keyword id="KW-0997">Cell inner membrane</keyword>
<keyword id="KW-1003">Cell membrane</keyword>
<keyword id="KW-0143">Chaperone</keyword>
<keyword id="KW-0472">Membrane</keyword>
<keyword id="KW-0812">Transmembrane</keyword>
<keyword id="KW-1133">Transmembrane helix</keyword>
<protein>
    <recommendedName>
        <fullName evidence="1">Co-chaperone protein DjlA</fullName>
    </recommendedName>
</protein>
<reference key="1">
    <citation type="journal article" date="2004" name="Nat. Biotechnol.">
        <title>The genome sequence of the capnophilic rumen bacterium Mannheimia succiniciproducens.</title>
        <authorList>
            <person name="Hong S.H."/>
            <person name="Kim J.S."/>
            <person name="Lee S.Y."/>
            <person name="In Y.H."/>
            <person name="Choi S.S."/>
            <person name="Rih J.-K."/>
            <person name="Kim C.H."/>
            <person name="Jeong H."/>
            <person name="Hur C.G."/>
            <person name="Kim J.J."/>
        </authorList>
    </citation>
    <scope>NUCLEOTIDE SEQUENCE [LARGE SCALE GENOMIC DNA]</scope>
    <source>
        <strain>KCTC 0769BP / MBEL55E</strain>
    </source>
</reference>
<feature type="chain" id="PRO_0000209431" description="Co-chaperone protein DjlA">
    <location>
        <begin position="1"/>
        <end position="288"/>
    </location>
</feature>
<feature type="topological domain" description="Periplasmic" evidence="1">
    <location>
        <begin position="1"/>
        <end position="6"/>
    </location>
</feature>
<feature type="transmembrane region" description="Helical" evidence="1">
    <location>
        <begin position="7"/>
        <end position="30"/>
    </location>
</feature>
<feature type="topological domain" description="Cytoplasmic" evidence="1">
    <location>
        <begin position="31"/>
        <end position="288"/>
    </location>
</feature>
<feature type="domain" description="J" evidence="1">
    <location>
        <begin position="222"/>
        <end position="288"/>
    </location>
</feature>
<dbReference type="EMBL" id="AE016827">
    <property type="protein sequence ID" value="AAU38509.1"/>
    <property type="status" value="ALT_INIT"/>
    <property type="molecule type" value="Genomic_DNA"/>
</dbReference>
<dbReference type="RefSeq" id="WP_011201062.1">
    <property type="nucleotide sequence ID" value="NC_006300.1"/>
</dbReference>
<dbReference type="STRING" id="221988.MS1902"/>
<dbReference type="KEGG" id="msu:MS1902"/>
<dbReference type="eggNOG" id="COG1076">
    <property type="taxonomic scope" value="Bacteria"/>
</dbReference>
<dbReference type="HOGENOM" id="CLU_066221_1_0_6"/>
<dbReference type="OrthoDB" id="9782583at2"/>
<dbReference type="Proteomes" id="UP000000607">
    <property type="component" value="Chromosome"/>
</dbReference>
<dbReference type="GO" id="GO:0005886">
    <property type="term" value="C:plasma membrane"/>
    <property type="evidence" value="ECO:0007669"/>
    <property type="project" value="UniProtKB-SubCell"/>
</dbReference>
<dbReference type="GO" id="GO:0051087">
    <property type="term" value="F:protein-folding chaperone binding"/>
    <property type="evidence" value="ECO:0007669"/>
    <property type="project" value="InterPro"/>
</dbReference>
<dbReference type="CDD" id="cd06257">
    <property type="entry name" value="DnaJ"/>
    <property type="match status" value="1"/>
</dbReference>
<dbReference type="CDD" id="cd07316">
    <property type="entry name" value="terB_like_DjlA"/>
    <property type="match status" value="1"/>
</dbReference>
<dbReference type="FunFam" id="1.10.287.110:FF:000011">
    <property type="entry name" value="Co-chaperone protein DjlA"/>
    <property type="match status" value="1"/>
</dbReference>
<dbReference type="Gene3D" id="1.10.287.110">
    <property type="entry name" value="DnaJ domain"/>
    <property type="match status" value="1"/>
</dbReference>
<dbReference type="Gene3D" id="1.10.3680.10">
    <property type="entry name" value="TerB-like"/>
    <property type="match status" value="1"/>
</dbReference>
<dbReference type="HAMAP" id="MF_01153">
    <property type="entry name" value="DjlA"/>
    <property type="match status" value="1"/>
</dbReference>
<dbReference type="InterPro" id="IPR023749">
    <property type="entry name" value="DjlA"/>
</dbReference>
<dbReference type="InterPro" id="IPR050817">
    <property type="entry name" value="DjlA_DnaK_co-chaperone"/>
</dbReference>
<dbReference type="InterPro" id="IPR007791">
    <property type="entry name" value="DjlA_N"/>
</dbReference>
<dbReference type="InterPro" id="IPR001623">
    <property type="entry name" value="DnaJ_domain"/>
</dbReference>
<dbReference type="InterPro" id="IPR036869">
    <property type="entry name" value="J_dom_sf"/>
</dbReference>
<dbReference type="InterPro" id="IPR029024">
    <property type="entry name" value="TerB-like"/>
</dbReference>
<dbReference type="NCBIfam" id="NF006948">
    <property type="entry name" value="PRK09430.1"/>
    <property type="match status" value="1"/>
</dbReference>
<dbReference type="PANTHER" id="PTHR24074">
    <property type="entry name" value="CO-CHAPERONE PROTEIN DJLA"/>
    <property type="match status" value="1"/>
</dbReference>
<dbReference type="Pfam" id="PF00226">
    <property type="entry name" value="DnaJ"/>
    <property type="match status" value="1"/>
</dbReference>
<dbReference type="Pfam" id="PF05099">
    <property type="entry name" value="TerB"/>
    <property type="match status" value="1"/>
</dbReference>
<dbReference type="PRINTS" id="PR00625">
    <property type="entry name" value="JDOMAIN"/>
</dbReference>
<dbReference type="SMART" id="SM00271">
    <property type="entry name" value="DnaJ"/>
    <property type="match status" value="1"/>
</dbReference>
<dbReference type="SUPFAM" id="SSF46565">
    <property type="entry name" value="Chaperone J-domain"/>
    <property type="match status" value="1"/>
</dbReference>
<dbReference type="PROSITE" id="PS50076">
    <property type="entry name" value="DNAJ_2"/>
    <property type="match status" value="1"/>
</dbReference>
<evidence type="ECO:0000255" key="1">
    <source>
        <dbReference type="HAMAP-Rule" id="MF_01153"/>
    </source>
</evidence>
<evidence type="ECO:0000305" key="2"/>
<accession>Q65RA1</accession>
<comment type="function">
    <text evidence="1">Regulatory DnaK co-chaperone. Direct interaction between DnaK and DjlA is needed for the induction of the wcaABCDE operon, involved in the synthesis of a colanic acid polysaccharide capsule, possibly through activation of the RcsB/RcsC phosphotransfer signaling pathway. The colanic acid capsule may help the bacterium survive conditions outside the host.</text>
</comment>
<comment type="subunit">
    <text evidence="1">Homodimer.</text>
</comment>
<comment type="subcellular location">
    <subcellularLocation>
        <location evidence="1">Cell inner membrane</location>
        <topology evidence="1">Single-pass type III membrane protein</topology>
    </subcellularLocation>
</comment>
<comment type="domain">
    <text evidence="1">The transmembrane domain is a dimerization domain.</text>
</comment>
<comment type="sequence caution" evidence="2">
    <conflict type="erroneous initiation">
        <sequence resource="EMBL-CDS" id="AAU38509"/>
    </conflict>
</comment>
<gene>
    <name evidence="1" type="primary">djlA</name>
    <name type="ordered locus">MS1902</name>
</gene>
<name>DJLA_MANSM</name>
<sequence length="288" mass="32878">MNFIGKILGFIIGYRFGGLFGGIAGLILGHIADKKLYELGSVNSSFFSKKITRQSLFMQTTFAVLGHLSKAKGRVTEEDIQLANNLMSQMQLDVANRQLAQNAFNRGKEADFPVREVIREFRIGCGQRADLLRMFLHIQVQAAFADSNLHNNEKELLFVIAEELGLSRFQFDQMLAMEMAARQFTQGGFYRQQQYQQQSHQQYNQENYQNSYRTSSGPTVEDAYKVLGVNAGDNQQTVKRAYRRLMNEHHPDKLVAKGLPKEMMEMAKEKAQQIQAAYDLICKVKGWK</sequence>